<feature type="chain" id="PRO_0000284059" description="Tribbles homolog 3">
    <location>
        <begin position="1"/>
        <end position="357"/>
    </location>
</feature>
<feature type="domain" description="Protein kinase" evidence="4">
    <location>
        <begin position="68"/>
        <end position="316"/>
    </location>
</feature>
<feature type="region of interest" description="Interaction with DDIT3/CHOP" evidence="1">
    <location>
        <begin position="1"/>
        <end position="127"/>
    </location>
</feature>
<feature type="region of interest" description="Disordered" evidence="5">
    <location>
        <begin position="1"/>
        <end position="63"/>
    </location>
</feature>
<feature type="region of interest" description="Disordered" evidence="5">
    <location>
        <begin position="333"/>
        <end position="357"/>
    </location>
</feature>
<feature type="compositionally biased region" description="Acidic residues" evidence="5">
    <location>
        <begin position="341"/>
        <end position="350"/>
    </location>
</feature>
<sequence length="357" mass="39657">MRASPLAVPANAPSRKKRLELDDDLDTECPSQKQARSGPQPRLPSCPLTLNPPPAPVHAPDVTTPSRLGPYVLLEPEEGSRTYRALHCPTGTEYICKVYPACERLAVLEPYWRLPHHGHVARPAEVLAGTQLLYAFFLRPHGDMHSLVRRRRRLPEPEAAALFRQMAAALAHCHQHGLVLRDLKLRRFVFTDRERTKLVLENLEDACVLTGPDDSLWDKHACPAYVGPEILSSRASYSGKAADVWSLGVALFTMLAGHYPFQDSEPALLFGKIRRGAFALPEGLSAPARCLVRCLLRREPTERLTASGILLHPWLRENAIPAALPRSRHCEADQVVPEGPGLEEAEEEGERDMGLYG</sequence>
<proteinExistence type="evidence at transcript level"/>
<gene>
    <name type="primary">TRIB3</name>
</gene>
<protein>
    <recommendedName>
        <fullName>Tribbles homolog 3</fullName>
        <shortName>TRB-3</shortName>
    </recommendedName>
</protein>
<dbReference type="EMBL" id="BC120209">
    <property type="protein sequence ID" value="AAI20210.1"/>
    <property type="molecule type" value="mRNA"/>
</dbReference>
<dbReference type="RefSeq" id="NP_001069571.1">
    <property type="nucleotide sequence ID" value="NM_001076103.1"/>
</dbReference>
<dbReference type="RefSeq" id="XP_005214869.1">
    <property type="nucleotide sequence ID" value="XM_005214812.5"/>
</dbReference>
<dbReference type="SMR" id="Q0VCE3"/>
<dbReference type="FunCoup" id="Q0VCE3">
    <property type="interactions" value="88"/>
</dbReference>
<dbReference type="STRING" id="9913.ENSBTAP00000022616"/>
<dbReference type="PaxDb" id="9913-ENSBTAP00000022616"/>
<dbReference type="Ensembl" id="ENSBTAT00000022616.4">
    <property type="protein sequence ID" value="ENSBTAP00000022616.2"/>
    <property type="gene ID" value="ENSBTAG00000017007.4"/>
</dbReference>
<dbReference type="GeneID" id="538465"/>
<dbReference type="KEGG" id="bta:538465"/>
<dbReference type="CTD" id="57761"/>
<dbReference type="VEuPathDB" id="HostDB:ENSBTAG00000017007"/>
<dbReference type="VGNC" id="VGNC:36310">
    <property type="gene designation" value="TRIB3"/>
</dbReference>
<dbReference type="eggNOG" id="KOG0583">
    <property type="taxonomic scope" value="Eukaryota"/>
</dbReference>
<dbReference type="GeneTree" id="ENSGT00950000182986"/>
<dbReference type="HOGENOM" id="CLU_000288_13_1_1"/>
<dbReference type="InParanoid" id="Q0VCE3"/>
<dbReference type="OMA" id="CPTRKQA"/>
<dbReference type="OrthoDB" id="410920at2759"/>
<dbReference type="TreeFam" id="TF329785"/>
<dbReference type="Reactome" id="R-BTA-165158">
    <property type="pathway name" value="Activation of AKT2"/>
</dbReference>
<dbReference type="Proteomes" id="UP000009136">
    <property type="component" value="Chromosome 13"/>
</dbReference>
<dbReference type="Bgee" id="ENSBTAG00000017007">
    <property type="expression patterns" value="Expressed in thymus and 83 other cell types or tissues"/>
</dbReference>
<dbReference type="GO" id="GO:0005654">
    <property type="term" value="C:nucleoplasm"/>
    <property type="evidence" value="ECO:0007669"/>
    <property type="project" value="Ensembl"/>
</dbReference>
<dbReference type="GO" id="GO:0005634">
    <property type="term" value="C:nucleus"/>
    <property type="evidence" value="ECO:0000318"/>
    <property type="project" value="GO_Central"/>
</dbReference>
<dbReference type="GO" id="GO:0005524">
    <property type="term" value="F:ATP binding"/>
    <property type="evidence" value="ECO:0007669"/>
    <property type="project" value="InterPro"/>
</dbReference>
<dbReference type="GO" id="GO:0031434">
    <property type="term" value="F:mitogen-activated protein kinase kinase binding"/>
    <property type="evidence" value="ECO:0000318"/>
    <property type="project" value="GO_Central"/>
</dbReference>
<dbReference type="GO" id="GO:0004672">
    <property type="term" value="F:protein kinase activity"/>
    <property type="evidence" value="ECO:0007669"/>
    <property type="project" value="InterPro"/>
</dbReference>
<dbReference type="GO" id="GO:0030291">
    <property type="term" value="F:protein serine/threonine kinase inhibitor activity"/>
    <property type="evidence" value="ECO:0007669"/>
    <property type="project" value="Ensembl"/>
</dbReference>
<dbReference type="GO" id="GO:0003714">
    <property type="term" value="F:transcription corepressor activity"/>
    <property type="evidence" value="ECO:0007669"/>
    <property type="project" value="Ensembl"/>
</dbReference>
<dbReference type="GO" id="GO:1990757">
    <property type="term" value="F:ubiquitin ligase activator activity"/>
    <property type="evidence" value="ECO:0007669"/>
    <property type="project" value="Ensembl"/>
</dbReference>
<dbReference type="GO" id="GO:0031625">
    <property type="term" value="F:ubiquitin protein ligase binding"/>
    <property type="evidence" value="ECO:0007669"/>
    <property type="project" value="Ensembl"/>
</dbReference>
<dbReference type="GO" id="GO:0032869">
    <property type="term" value="P:cellular response to insulin stimulus"/>
    <property type="evidence" value="ECO:0007669"/>
    <property type="project" value="Ensembl"/>
</dbReference>
<dbReference type="GO" id="GO:0070059">
    <property type="term" value="P:intrinsic apoptotic signaling pathway in response to endoplasmic reticulum stress"/>
    <property type="evidence" value="ECO:0000250"/>
    <property type="project" value="UniProtKB"/>
</dbReference>
<dbReference type="GO" id="GO:0045892">
    <property type="term" value="P:negative regulation of DNA-templated transcription"/>
    <property type="evidence" value="ECO:0000250"/>
    <property type="project" value="UniProtKB"/>
</dbReference>
<dbReference type="GO" id="GO:0045599">
    <property type="term" value="P:negative regulation of fat cell differentiation"/>
    <property type="evidence" value="ECO:0007669"/>
    <property type="project" value="Ensembl"/>
</dbReference>
<dbReference type="GO" id="GO:0045717">
    <property type="term" value="P:negative regulation of fatty acid biosynthetic process"/>
    <property type="evidence" value="ECO:0007669"/>
    <property type="project" value="Ensembl"/>
</dbReference>
<dbReference type="GO" id="GO:0046627">
    <property type="term" value="P:negative regulation of insulin receptor signaling pathway"/>
    <property type="evidence" value="ECO:0007669"/>
    <property type="project" value="Ensembl"/>
</dbReference>
<dbReference type="GO" id="GO:0043409">
    <property type="term" value="P:negative regulation of MAPK cascade"/>
    <property type="evidence" value="ECO:0007669"/>
    <property type="project" value="Ensembl"/>
</dbReference>
<dbReference type="GO" id="GO:0000122">
    <property type="term" value="P:negative regulation of transcription by RNA polymerase II"/>
    <property type="evidence" value="ECO:0007669"/>
    <property type="project" value="Ensembl"/>
</dbReference>
<dbReference type="GO" id="GO:0032436">
    <property type="term" value="P:positive regulation of proteasomal ubiquitin-dependent protein catabolic process"/>
    <property type="evidence" value="ECO:0000318"/>
    <property type="project" value="GO_Central"/>
</dbReference>
<dbReference type="GO" id="GO:0010506">
    <property type="term" value="P:regulation of autophagy"/>
    <property type="evidence" value="ECO:0000250"/>
    <property type="project" value="UniProtKB"/>
</dbReference>
<dbReference type="GO" id="GO:0010827">
    <property type="term" value="P:regulation of D-glucose transmembrane transport"/>
    <property type="evidence" value="ECO:0007669"/>
    <property type="project" value="Ensembl"/>
</dbReference>
<dbReference type="GO" id="GO:0034976">
    <property type="term" value="P:response to endoplasmic reticulum stress"/>
    <property type="evidence" value="ECO:0000250"/>
    <property type="project" value="UniProtKB"/>
</dbReference>
<dbReference type="FunFam" id="1.10.510.10:FF:000153">
    <property type="entry name" value="Tribbles homolog 2"/>
    <property type="match status" value="1"/>
</dbReference>
<dbReference type="FunFam" id="3.30.200.20:FF:000439">
    <property type="entry name" value="Tribbles pseudokinase 3"/>
    <property type="match status" value="1"/>
</dbReference>
<dbReference type="Gene3D" id="3.30.200.20">
    <property type="entry name" value="Phosphorylase Kinase, domain 1"/>
    <property type="match status" value="1"/>
</dbReference>
<dbReference type="Gene3D" id="1.10.510.10">
    <property type="entry name" value="Transferase(Phosphotransferase) domain 1"/>
    <property type="match status" value="1"/>
</dbReference>
<dbReference type="InterPro" id="IPR011009">
    <property type="entry name" value="Kinase-like_dom_sf"/>
</dbReference>
<dbReference type="InterPro" id="IPR000719">
    <property type="entry name" value="Prot_kinase_dom"/>
</dbReference>
<dbReference type="InterPro" id="IPR024104">
    <property type="entry name" value="Tribbles/Ser_Thr_kinase_40"/>
</dbReference>
<dbReference type="PANTHER" id="PTHR22961">
    <property type="entry name" value="SER/THR PROTEIN KINASE-TRB"/>
    <property type="match status" value="1"/>
</dbReference>
<dbReference type="PANTHER" id="PTHR22961:SF14">
    <property type="entry name" value="TRIBBLES HOMOLOG 3"/>
    <property type="match status" value="1"/>
</dbReference>
<dbReference type="Pfam" id="PF00069">
    <property type="entry name" value="Pkinase"/>
    <property type="match status" value="1"/>
</dbReference>
<dbReference type="SMART" id="SM00220">
    <property type="entry name" value="S_TKc"/>
    <property type="match status" value="1"/>
</dbReference>
<dbReference type="SUPFAM" id="SSF56112">
    <property type="entry name" value="Protein kinase-like (PK-like)"/>
    <property type="match status" value="1"/>
</dbReference>
<dbReference type="PROSITE" id="PS50011">
    <property type="entry name" value="PROTEIN_KINASE_DOM"/>
    <property type="match status" value="1"/>
</dbReference>
<accession>Q0VCE3</accession>
<name>TRIB3_BOVIN</name>
<evidence type="ECO:0000250" key="1"/>
<evidence type="ECO:0000250" key="2">
    <source>
        <dbReference type="UniProtKB" id="Q8K4K2"/>
    </source>
</evidence>
<evidence type="ECO:0000250" key="3">
    <source>
        <dbReference type="UniProtKB" id="Q96RU7"/>
    </source>
</evidence>
<evidence type="ECO:0000255" key="4">
    <source>
        <dbReference type="PROSITE-ProRule" id="PRU00159"/>
    </source>
</evidence>
<evidence type="ECO:0000256" key="5">
    <source>
        <dbReference type="SAM" id="MobiDB-lite"/>
    </source>
</evidence>
<evidence type="ECO:0000305" key="6"/>
<comment type="function">
    <text evidence="2 3">Inactive protein kinase which acts as a regulator of the integrated stress response (ISR), a process for adaptation to various stress (By similarity). Inhibits the transcriptional activity of DDIT3/CHOP and is involved in DDIT3/CHOP-dependent cell death during ER stress. May play a role in programmed neuronal cell death but does not appear to affect non-neuronal cells (By similarity). Acts as a negative feedback regulator of the ATF4-dependent transcription during the ISR: while TRIB3 expression is promoted by ATF4, TRIB3 protein interacts with ATF4 and inhibits ATF4 transcription activity. Disrupts insulin signaling by binding directly to Akt kinases and blocking their activation. May bind directly to and mask the 'Thr-308' phosphorylation site in AKT1 (By similarity). Interacts with the NF-kappa-B transactivator p65 RELA and inhibits its phosphorylation and thus its transcriptional activation activity. Interacts with MAPK kinases and regulates activation of MAP kinases (By similarity). Can inhibit APOBEC3A editing of nuclear DNA (By similarity).</text>
</comment>
<comment type="subunit">
    <text evidence="2 3">Interacts with AKT1, AKT2, MAP2K1 and MAP2K7. Interacts with ATF4 (By similarity). Interacts with DDIT3/CHOP and inhibits its interaction with EP300/P300. Interacts with APOBEC3C (By similarity). Interacts (via N-terminus) with APOBEC3A (By similarity). Interacts with RELA (By similarity).</text>
</comment>
<comment type="subcellular location">
    <subcellularLocation>
        <location evidence="2">Nucleus</location>
    </subcellularLocation>
</comment>
<comment type="domain">
    <text>The protein kinase domain is predicted to be catalytically inactive.</text>
</comment>
<comment type="similarity">
    <text evidence="6">Belongs to the protein kinase superfamily. CAMK Ser/Thr protein kinase family. Tribbles subfamily.</text>
</comment>
<reference key="1">
    <citation type="submission" date="2006-08" db="EMBL/GenBank/DDBJ databases">
        <authorList>
            <consortium name="NIH - Mammalian Gene Collection (MGC) project"/>
        </authorList>
    </citation>
    <scope>NUCLEOTIDE SEQUENCE [LARGE SCALE MRNA]</scope>
    <source>
        <strain>Hereford</strain>
        <tissue>Placenta</tissue>
    </source>
</reference>
<keyword id="KW-0053">Apoptosis</keyword>
<keyword id="KW-0539">Nucleus</keyword>
<keyword id="KW-0649">Protein kinase inhibitor</keyword>
<keyword id="KW-1185">Reference proteome</keyword>
<keyword id="KW-0804">Transcription</keyword>
<keyword id="KW-0805">Transcription regulation</keyword>
<organism>
    <name type="scientific">Bos taurus</name>
    <name type="common">Bovine</name>
    <dbReference type="NCBI Taxonomy" id="9913"/>
    <lineage>
        <taxon>Eukaryota</taxon>
        <taxon>Metazoa</taxon>
        <taxon>Chordata</taxon>
        <taxon>Craniata</taxon>
        <taxon>Vertebrata</taxon>
        <taxon>Euteleostomi</taxon>
        <taxon>Mammalia</taxon>
        <taxon>Eutheria</taxon>
        <taxon>Laurasiatheria</taxon>
        <taxon>Artiodactyla</taxon>
        <taxon>Ruminantia</taxon>
        <taxon>Pecora</taxon>
        <taxon>Bovidae</taxon>
        <taxon>Bovinae</taxon>
        <taxon>Bos</taxon>
    </lineage>
</organism>